<feature type="chain" id="PRO_0000409346" description="Protein MEI2-like 2">
    <location>
        <begin position="1"/>
        <end position="848"/>
    </location>
</feature>
<feature type="domain" description="RRM 1" evidence="2">
    <location>
        <begin position="197"/>
        <end position="270"/>
    </location>
</feature>
<feature type="domain" description="RRM 2" evidence="2">
    <location>
        <begin position="282"/>
        <end position="355"/>
    </location>
</feature>
<feature type="region of interest" description="Disordered" evidence="3">
    <location>
        <begin position="370"/>
        <end position="400"/>
    </location>
</feature>
<feature type="region of interest" description="Disordered" evidence="3">
    <location>
        <begin position="455"/>
        <end position="523"/>
    </location>
</feature>
<feature type="region of interest" description="Disordered" evidence="3">
    <location>
        <begin position="826"/>
        <end position="848"/>
    </location>
</feature>
<evidence type="ECO:0000250" key="1"/>
<evidence type="ECO:0000255" key="2">
    <source>
        <dbReference type="PROSITE-ProRule" id="PRU00176"/>
    </source>
</evidence>
<evidence type="ECO:0000256" key="3">
    <source>
        <dbReference type="SAM" id="MobiDB-lite"/>
    </source>
</evidence>
<comment type="function">
    <text evidence="1">Probable RNA-binding protein that may play a role in growth regulation.</text>
</comment>
<gene>
    <name type="primary">ML2</name>
    <name type="ordered locus">Os02g0719800</name>
    <name type="ordered locus">LOC_Os02g48790</name>
    <name type="ORF">OJ1008_D06.12-1</name>
</gene>
<dbReference type="EMBL" id="AB244277">
    <property type="protein sequence ID" value="BAE79764.1"/>
    <property type="molecule type" value="mRNA"/>
</dbReference>
<dbReference type="EMBL" id="AP004040">
    <property type="protein sequence ID" value="BAD12869.1"/>
    <property type="molecule type" value="Genomic_DNA"/>
</dbReference>
<dbReference type="EMBL" id="AP008208">
    <property type="protein sequence ID" value="BAF09860.1"/>
    <property type="molecule type" value="Genomic_DNA"/>
</dbReference>
<dbReference type="EMBL" id="AP014958">
    <property type="protein sequence ID" value="BAS80635.1"/>
    <property type="molecule type" value="Genomic_DNA"/>
</dbReference>
<dbReference type="EMBL" id="AK111503">
    <property type="protein sequence ID" value="BAG99283.1"/>
    <property type="molecule type" value="mRNA"/>
</dbReference>
<dbReference type="RefSeq" id="XP_015624974.1">
    <property type="nucleotide sequence ID" value="XM_015769488.1"/>
</dbReference>
<dbReference type="SMR" id="Q6ZI17"/>
<dbReference type="FunCoup" id="Q6ZI17">
    <property type="interactions" value="185"/>
</dbReference>
<dbReference type="PaxDb" id="39947-Q6ZI17"/>
<dbReference type="EnsemblPlants" id="Os02t0719800-02">
    <property type="protein sequence ID" value="Os02t0719800-02"/>
    <property type="gene ID" value="Os02g0719800"/>
</dbReference>
<dbReference type="Gramene" id="Os02t0719800-02">
    <property type="protein sequence ID" value="Os02t0719800-02"/>
    <property type="gene ID" value="Os02g0719800"/>
</dbReference>
<dbReference type="KEGG" id="dosa:Os02g0719800"/>
<dbReference type="eggNOG" id="KOG4660">
    <property type="taxonomic scope" value="Eukaryota"/>
</dbReference>
<dbReference type="HOGENOM" id="CLU_012447_1_0_1"/>
<dbReference type="InParanoid" id="Q6ZI17"/>
<dbReference type="OMA" id="GLYHHRP"/>
<dbReference type="OrthoDB" id="417481at2759"/>
<dbReference type="Proteomes" id="UP000000763">
    <property type="component" value="Chromosome 2"/>
</dbReference>
<dbReference type="Proteomes" id="UP000059680">
    <property type="component" value="Chromosome 2"/>
</dbReference>
<dbReference type="ExpressionAtlas" id="Q6ZI17">
    <property type="expression patterns" value="baseline and differential"/>
</dbReference>
<dbReference type="GO" id="GO:0003723">
    <property type="term" value="F:RNA binding"/>
    <property type="evidence" value="ECO:0000318"/>
    <property type="project" value="GO_Central"/>
</dbReference>
<dbReference type="GO" id="GO:0045836">
    <property type="term" value="P:positive regulation of meiotic nuclear division"/>
    <property type="evidence" value="ECO:0000318"/>
    <property type="project" value="GO_Central"/>
</dbReference>
<dbReference type="CDD" id="cd12524">
    <property type="entry name" value="RRM1_MEI2_like"/>
    <property type="match status" value="1"/>
</dbReference>
<dbReference type="CDD" id="cd12529">
    <property type="entry name" value="RRM2_MEI2_like"/>
    <property type="match status" value="1"/>
</dbReference>
<dbReference type="CDD" id="cd12531">
    <property type="entry name" value="RRM3_MEI2_like"/>
    <property type="match status" value="1"/>
</dbReference>
<dbReference type="FunFam" id="3.30.70.330:FF:000063">
    <property type="entry name" value="MEI2-like protein 5 isoform 2"/>
    <property type="match status" value="1"/>
</dbReference>
<dbReference type="FunFam" id="3.30.70.330:FF:000101">
    <property type="entry name" value="Protein MEI2-like 1"/>
    <property type="match status" value="1"/>
</dbReference>
<dbReference type="Gene3D" id="3.30.70.330">
    <property type="match status" value="2"/>
</dbReference>
<dbReference type="InterPro" id="IPR034453">
    <property type="entry name" value="MEI2-like_RRM1"/>
</dbReference>
<dbReference type="InterPro" id="IPR034454">
    <property type="entry name" value="MEI2-like_RRM3"/>
</dbReference>
<dbReference type="InterPro" id="IPR007201">
    <property type="entry name" value="Mei2-like_Rrm_C"/>
</dbReference>
<dbReference type="InterPro" id="IPR012677">
    <property type="entry name" value="Nucleotide-bd_a/b_plait_sf"/>
</dbReference>
<dbReference type="InterPro" id="IPR035979">
    <property type="entry name" value="RBD_domain_sf"/>
</dbReference>
<dbReference type="InterPro" id="IPR000504">
    <property type="entry name" value="RRM_dom"/>
</dbReference>
<dbReference type="PANTHER" id="PTHR23189">
    <property type="entry name" value="RNA RECOGNITION MOTIF-CONTAINING"/>
    <property type="match status" value="1"/>
</dbReference>
<dbReference type="Pfam" id="PF00076">
    <property type="entry name" value="RRM_1"/>
    <property type="match status" value="2"/>
</dbReference>
<dbReference type="Pfam" id="PF04059">
    <property type="entry name" value="RRM_2"/>
    <property type="match status" value="1"/>
</dbReference>
<dbReference type="SMART" id="SM00360">
    <property type="entry name" value="RRM"/>
    <property type="match status" value="3"/>
</dbReference>
<dbReference type="SUPFAM" id="SSF54928">
    <property type="entry name" value="RNA-binding domain, RBD"/>
    <property type="match status" value="2"/>
</dbReference>
<dbReference type="PROSITE" id="PS50102">
    <property type="entry name" value="RRM"/>
    <property type="match status" value="2"/>
</dbReference>
<sequence length="848" mass="93612">MDRPQDPFNSRGIAVPPAVKMRNMAGNNSPWIDPLPPPMNARNGLANASLFSTSLPVLPHEKINFLDSARGTPLMDDASAKLKELDDDPEGKDYKFDFDLRQIDDLLPNEDDLFAGITNEIEPAGQTNSMEELEEFDVFGSGGGMELDTDPVESITAGLGNTSIADGLRGNGVNHFGPSNSASTVAGEHPYGEHPSRTLFVRNINSNVDDTELRSLFEQYGDIRTLYTATKHRGFVMISYFDIRAARGAMRGLQNKPLRRRKLDIHFSIPKENPSDKDLNQGTLVIFNLDPSVSNEEVRQIFGTYGEVKEIRETPNKKHHKFIEFYDVRAAEAALRSLNKSEIAGKRIKLEPSRPGGTRRNLMQQLGHDIDQDEPRSYRIPHVGSPIASSPPGAWAQYSSPTDNNLLQAFNASPTGNGMSPIGMPPSLISNAVKIAPIGKDSNWSKYDKVFSNNNQPHGAAFQHSHSYQDHKSEHMSSSPGTLTGPEFLWGSPKPYSEHAQSPIWRPPAIGHAIPSNTRSQGQGLLYGGRQASLFGSQDQLHHHHVGSAPSGAPFESHFGFLPESPETSYMNQVRFGNIGNIGSGRNGTGLMLNMAARASVNPVSALSGNMSDNNSSSFRPILSPRLGQSFYGNPTYQGPGSFGLDNSIERGRNRRVDSSVFQADSKKQYQLDLEKIRKGDDTRTTLMIKNIPNKYTSKMLLAAIDEFHKGTYDFFYLPIDFKNKCNVGYAFINMISPVHIVSFYQAFNGKKWEKFNSEKVASLAYARIQGRTALISHFQNSSLMNEDKRCRPILFHSNGPDAGNQEPFPINGICIHMPLEDGAIATGDPFGNEEDNNQNERTAGEEL</sequence>
<accession>Q6ZI17</accession>
<accession>A0A0P0VNV9</accession>
<name>OML2_ORYSJ</name>
<reference key="1">
    <citation type="journal article" date="2006" name="Plant Cell">
        <title>PLASTOCHRON2 regulates leaf initiation and maturation in rice.</title>
        <authorList>
            <person name="Kawakatsu T."/>
            <person name="Itoh J."/>
            <person name="Miyoshi K."/>
            <person name="Kurata N."/>
            <person name="Alvarez N."/>
            <person name="Veit B."/>
            <person name="Nagato Y."/>
        </authorList>
    </citation>
    <scope>NUCLEOTIDE SEQUENCE [MRNA]</scope>
    <source>
        <strain>cv. Nipponbare</strain>
    </source>
</reference>
<reference key="2">
    <citation type="journal article" date="2005" name="Nature">
        <title>The map-based sequence of the rice genome.</title>
        <authorList>
            <consortium name="International rice genome sequencing project (IRGSP)"/>
        </authorList>
    </citation>
    <scope>NUCLEOTIDE SEQUENCE [LARGE SCALE GENOMIC DNA]</scope>
    <source>
        <strain>cv. Nipponbare</strain>
    </source>
</reference>
<reference key="3">
    <citation type="journal article" date="2008" name="Nucleic Acids Res.">
        <title>The rice annotation project database (RAP-DB): 2008 update.</title>
        <authorList>
            <consortium name="The rice annotation project (RAP)"/>
        </authorList>
    </citation>
    <scope>GENOME REANNOTATION</scope>
    <source>
        <strain>cv. Nipponbare</strain>
    </source>
</reference>
<reference key="4">
    <citation type="journal article" date="2013" name="Rice">
        <title>Improvement of the Oryza sativa Nipponbare reference genome using next generation sequence and optical map data.</title>
        <authorList>
            <person name="Kawahara Y."/>
            <person name="de la Bastide M."/>
            <person name="Hamilton J.P."/>
            <person name="Kanamori H."/>
            <person name="McCombie W.R."/>
            <person name="Ouyang S."/>
            <person name="Schwartz D.C."/>
            <person name="Tanaka T."/>
            <person name="Wu J."/>
            <person name="Zhou S."/>
            <person name="Childs K.L."/>
            <person name="Davidson R.M."/>
            <person name="Lin H."/>
            <person name="Quesada-Ocampo L."/>
            <person name="Vaillancourt B."/>
            <person name="Sakai H."/>
            <person name="Lee S.S."/>
            <person name="Kim J."/>
            <person name="Numa H."/>
            <person name="Itoh T."/>
            <person name="Buell C.R."/>
            <person name="Matsumoto T."/>
        </authorList>
    </citation>
    <scope>GENOME REANNOTATION</scope>
    <source>
        <strain>cv. Nipponbare</strain>
    </source>
</reference>
<reference key="5">
    <citation type="journal article" date="2003" name="Science">
        <title>Collection, mapping, and annotation of over 28,000 cDNA clones from japonica rice.</title>
        <authorList>
            <consortium name="The rice full-length cDNA consortium"/>
        </authorList>
    </citation>
    <scope>NUCLEOTIDE SEQUENCE [LARGE SCALE MRNA]</scope>
    <source>
        <strain>cv. Nipponbare</strain>
    </source>
</reference>
<reference key="6">
    <citation type="journal article" date="2004" name="Plant Mol. Biol.">
        <title>Diversification of genes encoding mei2 -like RNA binding proteins in plants.</title>
        <authorList>
            <person name="Anderson G.H."/>
            <person name="Alvarez N.D."/>
            <person name="Gilman C."/>
            <person name="Jeffares D.C."/>
            <person name="Trainor V.C."/>
            <person name="Hanson M.R."/>
            <person name="Veit B."/>
        </authorList>
    </citation>
    <scope>GENE FAMILY</scope>
</reference>
<organism>
    <name type="scientific">Oryza sativa subsp. japonica</name>
    <name type="common">Rice</name>
    <dbReference type="NCBI Taxonomy" id="39947"/>
    <lineage>
        <taxon>Eukaryota</taxon>
        <taxon>Viridiplantae</taxon>
        <taxon>Streptophyta</taxon>
        <taxon>Embryophyta</taxon>
        <taxon>Tracheophyta</taxon>
        <taxon>Spermatophyta</taxon>
        <taxon>Magnoliopsida</taxon>
        <taxon>Liliopsida</taxon>
        <taxon>Poales</taxon>
        <taxon>Poaceae</taxon>
        <taxon>BOP clade</taxon>
        <taxon>Oryzoideae</taxon>
        <taxon>Oryzeae</taxon>
        <taxon>Oryzinae</taxon>
        <taxon>Oryza</taxon>
        <taxon>Oryza sativa</taxon>
    </lineage>
</organism>
<keyword id="KW-1185">Reference proteome</keyword>
<keyword id="KW-0677">Repeat</keyword>
<keyword id="KW-0694">RNA-binding</keyword>
<proteinExistence type="evidence at transcript level"/>
<protein>
    <recommendedName>
        <fullName>Protein MEI2-like 2</fullName>
        <shortName>OML2</shortName>
    </recommendedName>
    <alternativeName>
        <fullName>MEI2-like protein 2</fullName>
    </alternativeName>
</protein>